<organism>
    <name type="scientific">Scheffersomyces stipitis (strain ATCC 58785 / CBS 6054 / NBRC 10063 / NRRL Y-11545)</name>
    <name type="common">Yeast</name>
    <name type="synonym">Pichia stipitis</name>
    <dbReference type="NCBI Taxonomy" id="322104"/>
    <lineage>
        <taxon>Eukaryota</taxon>
        <taxon>Fungi</taxon>
        <taxon>Dikarya</taxon>
        <taxon>Ascomycota</taxon>
        <taxon>Saccharomycotina</taxon>
        <taxon>Pichiomycetes</taxon>
        <taxon>Debaryomycetaceae</taxon>
        <taxon>Scheffersomyces</taxon>
    </lineage>
</organism>
<proteinExistence type="inferred from homology"/>
<name>AIM9_PICST</name>
<feature type="transit peptide" description="Mitochondrion" evidence="2">
    <location>
        <begin position="1"/>
        <end position="41"/>
    </location>
</feature>
<feature type="chain" id="PRO_0000408728" description="Altered inheritance of mitochondria protein 9, mitochondrial">
    <location>
        <begin position="42"/>
        <end position="631"/>
    </location>
</feature>
<protein>
    <recommendedName>
        <fullName>Altered inheritance of mitochondria protein 9, mitochondrial</fullName>
    </recommendedName>
    <alternativeName>
        <fullName>Found in mitochondrial proteome protein 29</fullName>
    </alternativeName>
</protein>
<gene>
    <name type="primary">AIM9</name>
    <name type="synonym">FMP29</name>
    <name type="ORF">PICST_28269</name>
</gene>
<dbReference type="EMBL" id="AAVQ01000001">
    <property type="protein sequence ID" value="EAZ63766.1"/>
    <property type="molecule type" value="Genomic_DNA"/>
</dbReference>
<dbReference type="RefSeq" id="XP_001387789.1">
    <property type="nucleotide sequence ID" value="XM_001387752.1"/>
</dbReference>
<dbReference type="FunCoup" id="A3GFJ4">
    <property type="interactions" value="23"/>
</dbReference>
<dbReference type="STRING" id="322104.A3GFJ4"/>
<dbReference type="GeneID" id="4851043"/>
<dbReference type="KEGG" id="pic:PICST_28269"/>
<dbReference type="eggNOG" id="ENOG502QV1E">
    <property type="taxonomic scope" value="Eukaryota"/>
</dbReference>
<dbReference type="HOGENOM" id="CLU_019189_0_1_1"/>
<dbReference type="InParanoid" id="A3GFJ4"/>
<dbReference type="OMA" id="GWIPQDM"/>
<dbReference type="OrthoDB" id="2968323at2759"/>
<dbReference type="Proteomes" id="UP000002258">
    <property type="component" value="Chromosome 1"/>
</dbReference>
<dbReference type="GO" id="GO:0005739">
    <property type="term" value="C:mitochondrion"/>
    <property type="evidence" value="ECO:0007669"/>
    <property type="project" value="UniProtKB-SubCell"/>
</dbReference>
<dbReference type="InterPro" id="IPR011009">
    <property type="entry name" value="Kinase-like_dom_sf"/>
</dbReference>
<dbReference type="InterPro" id="IPR051035">
    <property type="entry name" value="Mito_inheritance_9"/>
</dbReference>
<dbReference type="PANTHER" id="PTHR36091">
    <property type="entry name" value="ALTERED INHERITANCE OF MITOCHONDRIA PROTEIN 9, MITOCHONDRIAL"/>
    <property type="match status" value="1"/>
</dbReference>
<dbReference type="PANTHER" id="PTHR36091:SF1">
    <property type="entry name" value="ALTERED INHERITANCE OF MITOCHONDRIA PROTEIN 9, MITOCHONDRIAL"/>
    <property type="match status" value="1"/>
</dbReference>
<dbReference type="SUPFAM" id="SSF56112">
    <property type="entry name" value="Protein kinase-like (PK-like)"/>
    <property type="match status" value="1"/>
</dbReference>
<evidence type="ECO:0000250" key="1"/>
<evidence type="ECO:0000255" key="2"/>
<evidence type="ECO:0000305" key="3"/>
<accession>A3GFJ4</accession>
<comment type="subcellular location">
    <subcellularLocation>
        <location evidence="1">Mitochondrion</location>
    </subcellularLocation>
</comment>
<comment type="similarity">
    <text evidence="3">Belongs to the AIM9 family.</text>
</comment>
<sequence length="631" mass="71808">MLSRVVRQRSRSAISSFKLRAHAAFAETRIGVGISVQATRLQSTKLSANPEEIYTKISDSADPKRNQFFQYTWGSWLENDKLKKSHRETRFSIEGVSNLVQELNLTRKDPANVDSSGEPLLQIKPVQQLKDGSFVLTNNLSNKLIGEAQDKDAKLLVKSIASIHEGKDLVLRIPYKLESDYSISQKIKSEVATLDFLSLKLGLNVPKVVAYGDNRSNALQTPFILMEYIEGDLLMKKWNPLAADSEETDASLKSVIQPISDFQDKILSVNFNKFGSLYFHDDVSVLDQADVPYDGEENPLLVNRWRIGPSIERQFAKNKNHLSEKIVKEFNGPWKADAPLSLITSVASIELENAKNRLGLAQADSASKVEDVEVLKKQIETFEHLQAIGSKLFNSKSKSIMNVEELFRPKLFVPDLDPLNVIESNDKSYFIDFEYSTIKPFILTSYPNFVAYHGAKVYNLEEDIPGFTEMDEVEKQQYEFMYYKTRNERLWELELNSRRHDLIAVASPHVKVLKSPYLQALELKTDKDYLYVEGAIVQLQAMWDAYVANELCGSSSSEFPVQYTEEFLDRHQTDLEEYQIETVSSPFAATGGWIPQDMFETLKEQGIIVETENGNYKVEAEKALEEEPEEK</sequence>
<keyword id="KW-0496">Mitochondrion</keyword>
<keyword id="KW-1185">Reference proteome</keyword>
<keyword id="KW-0809">Transit peptide</keyword>
<reference key="1">
    <citation type="journal article" date="2007" name="Nat. Biotechnol.">
        <title>Genome sequence of the lignocellulose-bioconverting and xylose-fermenting yeast Pichia stipitis.</title>
        <authorList>
            <person name="Jeffries T.W."/>
            <person name="Grigoriev I.V."/>
            <person name="Grimwood J."/>
            <person name="Laplaza J.M."/>
            <person name="Aerts A."/>
            <person name="Salamov A."/>
            <person name="Schmutz J."/>
            <person name="Lindquist E."/>
            <person name="Dehal P."/>
            <person name="Shapiro H."/>
            <person name="Jin Y.-S."/>
            <person name="Passoth V."/>
            <person name="Richardson P.M."/>
        </authorList>
    </citation>
    <scope>NUCLEOTIDE SEQUENCE [LARGE SCALE GENOMIC DNA]</scope>
    <source>
        <strain>ATCC 58785 / CBS 6054 / NBRC 10063 / NRRL Y-11545</strain>
    </source>
</reference>